<organism>
    <name type="scientific">Mus musculus</name>
    <name type="common">Mouse</name>
    <dbReference type="NCBI Taxonomy" id="10090"/>
    <lineage>
        <taxon>Eukaryota</taxon>
        <taxon>Metazoa</taxon>
        <taxon>Chordata</taxon>
        <taxon>Craniata</taxon>
        <taxon>Vertebrata</taxon>
        <taxon>Euteleostomi</taxon>
        <taxon>Mammalia</taxon>
        <taxon>Eutheria</taxon>
        <taxon>Euarchontoglires</taxon>
        <taxon>Glires</taxon>
        <taxon>Rodentia</taxon>
        <taxon>Myomorpha</taxon>
        <taxon>Muroidea</taxon>
        <taxon>Muridae</taxon>
        <taxon>Murinae</taxon>
        <taxon>Mus</taxon>
        <taxon>Mus</taxon>
    </lineage>
</organism>
<name>TRIM9_MOUSE</name>
<comment type="function">
    <text evidence="2">E3 ubiquitin-protein ligase which ubiquitinates itself in cooperation with an E2 enzyme UBE2D2/UBC4 and serves as a targeting signal for proteasomal degradation. May play a role in regulation of neuronal functions. May act as a regulator of synaptic vesicle exocytosis by controlling the availability of SNAP25 for the SNARE complex formation.</text>
</comment>
<comment type="catalytic activity">
    <reaction evidence="2">
        <text>S-ubiquitinyl-[E2 ubiquitin-conjugating enzyme]-L-cysteine + [acceptor protein]-L-lysine = [E2 ubiquitin-conjugating enzyme]-L-cysteine + N(6)-ubiquitinyl-[acceptor protein]-L-lysine.</text>
        <dbReference type="EC" id="2.3.2.27"/>
    </reaction>
</comment>
<comment type="pathway">
    <text evidence="2">Protein modification; protein ubiquitination.</text>
</comment>
<comment type="subunit">
    <text evidence="1">Interacts with SNAP25.</text>
</comment>
<comment type="subcellular location">
    <subcellularLocation>
        <location evidence="11">Cytoplasm</location>
    </subcellularLocation>
    <subcellularLocation>
        <location evidence="11">Cell projection</location>
        <location evidence="11">Dendrite</location>
    </subcellularLocation>
    <subcellularLocation>
        <location evidence="1">Cytoplasmic vesicle</location>
        <location evidence="1">Secretory vesicle</location>
        <location evidence="1">Synaptic vesicle</location>
    </subcellularLocation>
    <subcellularLocation>
        <location evidence="1">Synapse</location>
    </subcellularLocation>
    <subcellularLocation>
        <location evidence="1">Cytoplasm</location>
        <location evidence="1">Cytoskeleton</location>
    </subcellularLocation>
    <text evidence="1 11">Enriched at synaptic terminals where it exists in a soluble form and a synaptic vesicle-associated form. Associated with the cytoskeleton (By similarity). Found in proximal dendrites of pyramidal neurons in the cerebral cortex and hippocampus, and Purkinje cells in the cerebellum (PubMed:20085810).</text>
</comment>
<comment type="alternative products">
    <event type="alternative splicing"/>
    <isoform>
        <id>Q8C7M3-1</id>
        <name>1</name>
        <sequence type="displayed"/>
    </isoform>
    <isoform>
        <id>Q8C7M3-2</id>
        <name>2</name>
        <sequence type="described" ref="VSP_007930 VSP_007935"/>
    </isoform>
    <isoform>
        <id>Q8C7M3-3</id>
        <name>3</name>
        <sequence type="described" ref="VSP_007931 VSP_007935 VSP_007936"/>
    </isoform>
    <isoform>
        <id>Q8C7M3-4</id>
        <name>4</name>
        <sequence type="described" ref="VSP_007937 VSP_007938"/>
    </isoform>
    <isoform>
        <id>Q8C7M3-5</id>
        <name>5</name>
        <sequence type="described" ref="VSP_007932"/>
    </isoform>
    <isoform>
        <id>Q8C7M3-6</id>
        <name>6</name>
        <sequence type="described" ref="VSP_007933 VSP_007934"/>
    </isoform>
</comment>
<comment type="tissue specificity">
    <text evidence="10 11">Brain. Expression is higher in the cerebral cortex and hippocampus (at protein level). Its expression is mainly confined to the central nervous system. The developing neocortex, the dorsal thalamus, the midbrain, the basal area of the hindbrain and spinal cord show high level of expression during embryogenesis. In adult brain, it is detected in the Purkinje cells of the cerebellum, in the hippocampus, and in the cortex.</text>
</comment>
<comment type="developmental stage">
    <text evidence="10">First seen at 9.5 dpc. From 9.5 dpc to 11.5 dpc, it remains uniformly present in the ventral part of the entire neuroepithelium and in the dorsal root ganglia. A more restricted central nervous system (CNS) expression is observed at 13.5 dpc and 15.5 dpc when it is present in specific regions of the forebrain, midbrain, hindbrain and spinal cord.</text>
</comment>
<comment type="domain">
    <text evidence="1">The coiled coil domain mediates the interaction with the N-terminal t-SNARE domain of SNAP25.</text>
</comment>
<comment type="PTM">
    <text evidence="2">Auto-ubiquitinated.</text>
</comment>
<comment type="miscellaneous">
    <molecule>Isoform 1</molecule>
    <text>May be due to an intron retention.</text>
</comment>
<comment type="miscellaneous">
    <molecule>Isoform 2</molecule>
    <text evidence="16">May be due to a competing acceptor splice site and to an exon skipping.</text>
</comment>
<comment type="miscellaneous">
    <molecule>Isoform 3</molecule>
    <text evidence="16">May be due to a competing donor splice site and ?.</text>
</comment>
<comment type="miscellaneous">
    <molecule>Isoform 4</molecule>
    <text evidence="16">May be due to an intron retention.</text>
</comment>
<comment type="miscellaneous">
    <molecule>Isoform 5</molecule>
    <text evidence="16">May be due to exon skipping.</text>
</comment>
<comment type="miscellaneous">
    <molecule>Isoform 6</molecule>
    <text evidence="16">May be due to an exon inclusion.</text>
</comment>
<comment type="similarity">
    <text evidence="16">Belongs to the TRIM/RBCC family.</text>
</comment>
<comment type="sequence caution" evidence="16">
    <conflict type="erroneous initiation">
        <sequence resource="EMBL-CDS" id="BAC97919"/>
    </conflict>
</comment>
<sequence>MEEMEEELKCPVCGSFYREPIILPCSHNLCQACARNILVQTPESESPQSRRASGSGVSDYDYLDLDKMSLYSEADSGYGSYGGFASAPTTPCQKSPNGVRVFPPAMPPPPTHLSPALAPVPRNSCITCPQCHRSLILDDRGLRGFPKNRVLEGVIDRYQQSKAAALKCQLCEKAPKEATVMCEQCDVFYCDPCRLRCHPPRGPLAKHRLVPPAQGRVSRRLSPRKVSTCTDHELENHSMYCVQCKMPVCYQCLEEGKHSSHEVKALGAMWKLHKSQLSQALNGLSDRAKEAKEFLVQLRTMVQQIQENSVEFEACLVAQCDALIDALNRRKAQLLARVNKEHEHKLKVVRDQISHCTVKLRQTTGLMEYCLEVIKENDPSGFLQISDALIRRVHLTEDQWGKGTLTPRMTTDFDLSLDNSPLLQSIHQLDFVQVKASSPVPATPILQLEECCTHNNSATLSWKQPPLSTVAADGYILELDDGSGGQFREVYVGKETMCTVDGLHFNSTYNARVKAFNKTGVSPYSKTLVLQTSEAAGAHETKPMKDTDSEEQTLPFPVPSERLPLRRMSPFSSTLNLQPSFPGRSYFDFRSSPHQLSLHSSLQSLNAPGCNFETQSASYSQLVDIKKLLAVAWFAFDPGSAHSDIIFSNDNLTVTCSSYDDRVVLGKTGFSKGVHYWELTIDRYDNHPDPAFGVARIDVMKDMMLGKDDKAWAMYVDNNRSWFMHNNSHTNRTEGGITKGATIGVLLDLNRKTLTFFVNNEQQGPIAFENVEGLFFPAVSLNRNVQVSLWAPGLRACSGCYFKVCPGAVKSPQAPAP</sequence>
<evidence type="ECO:0000250" key="1">
    <source>
        <dbReference type="UniProtKB" id="Q91ZY8"/>
    </source>
</evidence>
<evidence type="ECO:0000250" key="2">
    <source>
        <dbReference type="UniProtKB" id="Q9C026"/>
    </source>
</evidence>
<evidence type="ECO:0000255" key="3"/>
<evidence type="ECO:0000255" key="4">
    <source>
        <dbReference type="PROSITE-ProRule" id="PRU00024"/>
    </source>
</evidence>
<evidence type="ECO:0000255" key="5">
    <source>
        <dbReference type="PROSITE-ProRule" id="PRU00175"/>
    </source>
</evidence>
<evidence type="ECO:0000255" key="6">
    <source>
        <dbReference type="PROSITE-ProRule" id="PRU00316"/>
    </source>
</evidence>
<evidence type="ECO:0000255" key="7">
    <source>
        <dbReference type="PROSITE-ProRule" id="PRU00548"/>
    </source>
</evidence>
<evidence type="ECO:0000255" key="8">
    <source>
        <dbReference type="PROSITE-ProRule" id="PRU00586"/>
    </source>
</evidence>
<evidence type="ECO:0000256" key="9">
    <source>
        <dbReference type="SAM" id="MobiDB-lite"/>
    </source>
</evidence>
<evidence type="ECO:0000269" key="10">
    <source>
    </source>
</evidence>
<evidence type="ECO:0000269" key="11">
    <source>
    </source>
</evidence>
<evidence type="ECO:0000303" key="12">
    <source>
    </source>
</evidence>
<evidence type="ECO:0000303" key="13">
    <source>
    </source>
</evidence>
<evidence type="ECO:0000303" key="14">
    <source>
    </source>
</evidence>
<evidence type="ECO:0000303" key="15">
    <source>
    </source>
</evidence>
<evidence type="ECO:0000305" key="16"/>
<evidence type="ECO:0007744" key="17">
    <source>
    </source>
</evidence>
<reference key="1">
    <citation type="journal article" date="2005" name="Science">
        <title>The transcriptional landscape of the mammalian genome.</title>
        <authorList>
            <person name="Carninci P."/>
            <person name="Kasukawa T."/>
            <person name="Katayama S."/>
            <person name="Gough J."/>
            <person name="Frith M.C."/>
            <person name="Maeda N."/>
            <person name="Oyama R."/>
            <person name="Ravasi T."/>
            <person name="Lenhard B."/>
            <person name="Wells C."/>
            <person name="Kodzius R."/>
            <person name="Shimokawa K."/>
            <person name="Bajic V.B."/>
            <person name="Brenner S.E."/>
            <person name="Batalov S."/>
            <person name="Forrest A.R."/>
            <person name="Zavolan M."/>
            <person name="Davis M.J."/>
            <person name="Wilming L.G."/>
            <person name="Aidinis V."/>
            <person name="Allen J.E."/>
            <person name="Ambesi-Impiombato A."/>
            <person name="Apweiler R."/>
            <person name="Aturaliya R.N."/>
            <person name="Bailey T.L."/>
            <person name="Bansal M."/>
            <person name="Baxter L."/>
            <person name="Beisel K.W."/>
            <person name="Bersano T."/>
            <person name="Bono H."/>
            <person name="Chalk A.M."/>
            <person name="Chiu K.P."/>
            <person name="Choudhary V."/>
            <person name="Christoffels A."/>
            <person name="Clutterbuck D.R."/>
            <person name="Crowe M.L."/>
            <person name="Dalla E."/>
            <person name="Dalrymple B.P."/>
            <person name="de Bono B."/>
            <person name="Della Gatta G."/>
            <person name="di Bernardo D."/>
            <person name="Down T."/>
            <person name="Engstrom P."/>
            <person name="Fagiolini M."/>
            <person name="Faulkner G."/>
            <person name="Fletcher C.F."/>
            <person name="Fukushima T."/>
            <person name="Furuno M."/>
            <person name="Futaki S."/>
            <person name="Gariboldi M."/>
            <person name="Georgii-Hemming P."/>
            <person name="Gingeras T.R."/>
            <person name="Gojobori T."/>
            <person name="Green R.E."/>
            <person name="Gustincich S."/>
            <person name="Harbers M."/>
            <person name="Hayashi Y."/>
            <person name="Hensch T.K."/>
            <person name="Hirokawa N."/>
            <person name="Hill D."/>
            <person name="Huminiecki L."/>
            <person name="Iacono M."/>
            <person name="Ikeo K."/>
            <person name="Iwama A."/>
            <person name="Ishikawa T."/>
            <person name="Jakt M."/>
            <person name="Kanapin A."/>
            <person name="Katoh M."/>
            <person name="Kawasawa Y."/>
            <person name="Kelso J."/>
            <person name="Kitamura H."/>
            <person name="Kitano H."/>
            <person name="Kollias G."/>
            <person name="Krishnan S.P."/>
            <person name="Kruger A."/>
            <person name="Kummerfeld S.K."/>
            <person name="Kurochkin I.V."/>
            <person name="Lareau L.F."/>
            <person name="Lazarevic D."/>
            <person name="Lipovich L."/>
            <person name="Liu J."/>
            <person name="Liuni S."/>
            <person name="McWilliam S."/>
            <person name="Madan Babu M."/>
            <person name="Madera M."/>
            <person name="Marchionni L."/>
            <person name="Matsuda H."/>
            <person name="Matsuzawa S."/>
            <person name="Miki H."/>
            <person name="Mignone F."/>
            <person name="Miyake S."/>
            <person name="Morris K."/>
            <person name="Mottagui-Tabar S."/>
            <person name="Mulder N."/>
            <person name="Nakano N."/>
            <person name="Nakauchi H."/>
            <person name="Ng P."/>
            <person name="Nilsson R."/>
            <person name="Nishiguchi S."/>
            <person name="Nishikawa S."/>
            <person name="Nori F."/>
            <person name="Ohara O."/>
            <person name="Okazaki Y."/>
            <person name="Orlando V."/>
            <person name="Pang K.C."/>
            <person name="Pavan W.J."/>
            <person name="Pavesi G."/>
            <person name="Pesole G."/>
            <person name="Petrovsky N."/>
            <person name="Piazza S."/>
            <person name="Reed J."/>
            <person name="Reid J.F."/>
            <person name="Ring B.Z."/>
            <person name="Ringwald M."/>
            <person name="Rost B."/>
            <person name="Ruan Y."/>
            <person name="Salzberg S.L."/>
            <person name="Sandelin A."/>
            <person name="Schneider C."/>
            <person name="Schoenbach C."/>
            <person name="Sekiguchi K."/>
            <person name="Semple C.A."/>
            <person name="Seno S."/>
            <person name="Sessa L."/>
            <person name="Sheng Y."/>
            <person name="Shibata Y."/>
            <person name="Shimada H."/>
            <person name="Shimada K."/>
            <person name="Silva D."/>
            <person name="Sinclair B."/>
            <person name="Sperling S."/>
            <person name="Stupka E."/>
            <person name="Sugiura K."/>
            <person name="Sultana R."/>
            <person name="Takenaka Y."/>
            <person name="Taki K."/>
            <person name="Tammoja K."/>
            <person name="Tan S.L."/>
            <person name="Tang S."/>
            <person name="Taylor M.S."/>
            <person name="Tegner J."/>
            <person name="Teichmann S.A."/>
            <person name="Ueda H.R."/>
            <person name="van Nimwegen E."/>
            <person name="Verardo R."/>
            <person name="Wei C.L."/>
            <person name="Yagi K."/>
            <person name="Yamanishi H."/>
            <person name="Zabarovsky E."/>
            <person name="Zhu S."/>
            <person name="Zimmer A."/>
            <person name="Hide W."/>
            <person name="Bult C."/>
            <person name="Grimmond S.M."/>
            <person name="Teasdale R.D."/>
            <person name="Liu E.T."/>
            <person name="Brusic V."/>
            <person name="Quackenbush J."/>
            <person name="Wahlestedt C."/>
            <person name="Mattick J.S."/>
            <person name="Hume D.A."/>
            <person name="Kai C."/>
            <person name="Sasaki D."/>
            <person name="Tomaru Y."/>
            <person name="Fukuda S."/>
            <person name="Kanamori-Katayama M."/>
            <person name="Suzuki M."/>
            <person name="Aoki J."/>
            <person name="Arakawa T."/>
            <person name="Iida J."/>
            <person name="Imamura K."/>
            <person name="Itoh M."/>
            <person name="Kato T."/>
            <person name="Kawaji H."/>
            <person name="Kawagashira N."/>
            <person name="Kawashima T."/>
            <person name="Kojima M."/>
            <person name="Kondo S."/>
            <person name="Konno H."/>
            <person name="Nakano K."/>
            <person name="Ninomiya N."/>
            <person name="Nishio T."/>
            <person name="Okada M."/>
            <person name="Plessy C."/>
            <person name="Shibata K."/>
            <person name="Shiraki T."/>
            <person name="Suzuki S."/>
            <person name="Tagami M."/>
            <person name="Waki K."/>
            <person name="Watahiki A."/>
            <person name="Okamura-Oho Y."/>
            <person name="Suzuki H."/>
            <person name="Kawai J."/>
            <person name="Hayashizaki Y."/>
        </authorList>
    </citation>
    <scope>NUCLEOTIDE SEQUENCE [LARGE SCALE MRNA] (ISOFORMS 1; 2; 3 AND 4)</scope>
    <source>
        <strain>C57BL/6J</strain>
        <tissue>Cerebellum</tissue>
        <tissue>Diencephalon</tissue>
        <tissue>Head</tissue>
        <tissue>Hippocampus</tissue>
    </source>
</reference>
<reference key="2">
    <citation type="journal article" date="2003" name="DNA Res.">
        <title>Prediction of the coding sequences of mouse homologues of KIAA gene: III. The complete nucleotide sequences of 500 mouse KIAA-homologous cDNAs identified by screening of terminal sequences of cDNA clones randomly sampled from size-fractionated libraries.</title>
        <authorList>
            <person name="Okazaki N."/>
            <person name="Kikuno R."/>
            <person name="Ohara R."/>
            <person name="Inamoto S."/>
            <person name="Koseki H."/>
            <person name="Hiraoka S."/>
            <person name="Saga Y."/>
            <person name="Nagase T."/>
            <person name="Ohara O."/>
            <person name="Koga H."/>
        </authorList>
    </citation>
    <scope>NUCLEOTIDE SEQUENCE [LARGE SCALE MRNA] (ISOFORM 3)</scope>
    <source>
        <tissue>Brain</tissue>
    </source>
</reference>
<reference key="3">
    <citation type="journal article" date="2004" name="Genome Res.">
        <title>The status, quality, and expansion of the NIH full-length cDNA project: the Mammalian Gene Collection (MGC).</title>
        <authorList>
            <consortium name="The MGC Project Team"/>
        </authorList>
    </citation>
    <scope>NUCLEOTIDE SEQUENCE [LARGE SCALE MRNA] (ISOFORM 6)</scope>
    <source>
        <strain>C57BL/6J</strain>
        <tissue>Brain</tissue>
    </source>
</reference>
<reference key="4">
    <citation type="journal article" date="2001" name="EMBO J.">
        <title>The tripartite motif family identifies cell compartments.</title>
        <authorList>
            <person name="Reymond A."/>
            <person name="Meroni G."/>
            <person name="Fantozzi A."/>
            <person name="Merla G."/>
            <person name="Cairo S."/>
            <person name="Luzi L."/>
            <person name="Riganelli D."/>
            <person name="Zanaria E."/>
            <person name="Messali S."/>
            <person name="Cainarca S."/>
            <person name="Guffanti A."/>
            <person name="Minucci S."/>
            <person name="Pelicci P.G."/>
            <person name="Ballabio A."/>
        </authorList>
    </citation>
    <scope>NUCLEOTIDE SEQUENCE [MRNA] OF 317-679 (ISOFORM 5)</scope>
</reference>
<reference key="5">
    <citation type="journal article" date="2002" name="Mech. Dev.">
        <title>TRIM9 is specifically expressed in the embryonic and adult nervous system.</title>
        <authorList>
            <person name="Berti C."/>
            <person name="Messali S."/>
            <person name="Ballabio A."/>
            <person name="Reymond A."/>
            <person name="Meroni G."/>
        </authorList>
    </citation>
    <scope>TISSUE SPECIFICITY</scope>
    <scope>DEVELOPMENTAL STAGE</scope>
</reference>
<reference key="6">
    <citation type="journal article" date="2010" name="Cell">
        <title>A tissue-specific atlas of mouse protein phosphorylation and expression.</title>
        <authorList>
            <person name="Huttlin E.L."/>
            <person name="Jedrychowski M.P."/>
            <person name="Elias J.E."/>
            <person name="Goswami T."/>
            <person name="Rad R."/>
            <person name="Beausoleil S.A."/>
            <person name="Villen J."/>
            <person name="Haas W."/>
            <person name="Sowa M.E."/>
            <person name="Gygi S.P."/>
        </authorList>
    </citation>
    <scope>PHOSPHORYLATION [LARGE SCALE ANALYSIS] AT THR-41; SER-44; SER-46; SER-49 AND SER-53</scope>
    <scope>IDENTIFICATION BY MASS SPECTROMETRY [LARGE SCALE ANALYSIS]</scope>
    <source>
        <tissue>Brain</tissue>
    </source>
</reference>
<reference key="7">
    <citation type="journal article" date="2010" name="Neurobiol. Dis.">
        <title>TRIM9, a novel brain-specific E3 ubiquitin ligase, is repressed in the brain of Parkinson's disease and dementia with Lewy bodies.</title>
        <authorList>
            <person name="Tanji K."/>
            <person name="Kamitani T."/>
            <person name="Mori F."/>
            <person name="Kakita A."/>
            <person name="Takahashi H."/>
            <person name="Wakabayashi K."/>
        </authorList>
    </citation>
    <scope>SUBCELLULAR LOCATION</scope>
    <scope>TISSUE SPECIFICITY</scope>
</reference>
<dbReference type="EC" id="2.3.2.27" evidence="2"/>
<dbReference type="EMBL" id="AK049907">
    <property type="protein sequence ID" value="BAC33982.1"/>
    <property type="molecule type" value="mRNA"/>
</dbReference>
<dbReference type="EMBL" id="AK034029">
    <property type="protein sequence ID" value="BAC28552.1"/>
    <property type="molecule type" value="mRNA"/>
</dbReference>
<dbReference type="EMBL" id="AK028280">
    <property type="protein sequence ID" value="BAC25854.1"/>
    <property type="molecule type" value="mRNA"/>
</dbReference>
<dbReference type="EMBL" id="AK048875">
    <property type="protein sequence ID" value="BAC33479.1"/>
    <property type="molecule type" value="mRNA"/>
</dbReference>
<dbReference type="EMBL" id="AK129109">
    <property type="protein sequence ID" value="BAC97919.1"/>
    <property type="status" value="ALT_INIT"/>
    <property type="molecule type" value="mRNA"/>
</dbReference>
<dbReference type="EMBL" id="BC052034">
    <property type="protein sequence ID" value="AAH52034.1"/>
    <property type="molecule type" value="mRNA"/>
</dbReference>
<dbReference type="EMBL" id="AF220039">
    <property type="protein sequence ID" value="AAG53493.1"/>
    <property type="molecule type" value="mRNA"/>
</dbReference>
<dbReference type="CCDS" id="CCDS49077.1">
    <molecule id="Q8C7M3-3"/>
</dbReference>
<dbReference type="CCDS" id="CCDS88348.1">
    <molecule id="Q8C7M3-6"/>
</dbReference>
<dbReference type="RefSeq" id="NP_001103672.1">
    <molecule id="Q8C7M3-3"/>
    <property type="nucleotide sequence ID" value="NM_001110202.2"/>
</dbReference>
<dbReference type="RefSeq" id="NP_001103673.1">
    <property type="nucleotide sequence ID" value="NM_001110203.1"/>
</dbReference>
<dbReference type="RefSeq" id="NP_001273315.1">
    <molecule id="Q8C7M3-6"/>
    <property type="nucleotide sequence ID" value="NM_001286386.2"/>
</dbReference>
<dbReference type="RefSeq" id="NP_001273316.1">
    <property type="nucleotide sequence ID" value="NM_001286387.1"/>
</dbReference>
<dbReference type="RefSeq" id="NP_001273317.1">
    <property type="nucleotide sequence ID" value="NM_001286388.1"/>
</dbReference>
<dbReference type="RefSeq" id="NP_001392290.1">
    <molecule id="Q8C7M3-1"/>
    <property type="nucleotide sequence ID" value="NM_001405361.1"/>
</dbReference>
<dbReference type="RefSeq" id="NP_001392299.1">
    <molecule id="Q8C7M3-5"/>
    <property type="nucleotide sequence ID" value="NM_001405370.1"/>
</dbReference>
<dbReference type="RefSeq" id="NP_001392305.1">
    <molecule id="Q8C7M3-4"/>
    <property type="nucleotide sequence ID" value="NM_001405376.1"/>
</dbReference>
<dbReference type="RefSeq" id="NP_444397.2">
    <property type="nucleotide sequence ID" value="NM_053167.3"/>
</dbReference>
<dbReference type="SMR" id="Q8C7M3"/>
<dbReference type="BioGRID" id="220445">
    <property type="interactions" value="12"/>
</dbReference>
<dbReference type="FunCoup" id="Q8C7M3">
    <property type="interactions" value="692"/>
</dbReference>
<dbReference type="IntAct" id="Q8C7M3">
    <property type="interactions" value="1"/>
</dbReference>
<dbReference type="MINT" id="Q8C7M3"/>
<dbReference type="STRING" id="10090.ENSMUSP00000106151"/>
<dbReference type="iPTMnet" id="Q8C7M3"/>
<dbReference type="PhosphoSitePlus" id="Q8C7M3"/>
<dbReference type="SwissPalm" id="Q8C7M3"/>
<dbReference type="PaxDb" id="10090-ENSMUSP00000106151"/>
<dbReference type="PeptideAtlas" id="Q8C7M3"/>
<dbReference type="ProteomicsDB" id="298306">
    <molecule id="Q8C7M3-1"/>
</dbReference>
<dbReference type="ProteomicsDB" id="298307">
    <molecule id="Q8C7M3-2"/>
</dbReference>
<dbReference type="ProteomicsDB" id="298308">
    <molecule id="Q8C7M3-3"/>
</dbReference>
<dbReference type="ProteomicsDB" id="298309">
    <molecule id="Q8C7M3-4"/>
</dbReference>
<dbReference type="ProteomicsDB" id="298310">
    <molecule id="Q8C7M3-5"/>
</dbReference>
<dbReference type="ProteomicsDB" id="298311">
    <molecule id="Q8C7M3-6"/>
</dbReference>
<dbReference type="Antibodypedia" id="10667">
    <property type="antibodies" value="507 antibodies from 25 providers"/>
</dbReference>
<dbReference type="DNASU" id="94090"/>
<dbReference type="Ensembl" id="ENSMUST00000110520.10">
    <molecule id="Q8C7M3-3"/>
    <property type="protein sequence ID" value="ENSMUSP00000106149.3"/>
    <property type="gene ID" value="ENSMUSG00000021071.18"/>
</dbReference>
<dbReference type="Ensembl" id="ENSMUST00000221041.2">
    <molecule id="Q8C7M3-4"/>
    <property type="protein sequence ID" value="ENSMUSP00000152496.2"/>
    <property type="gene ID" value="ENSMUSG00000021071.18"/>
</dbReference>
<dbReference type="Ensembl" id="ENSMUST00000221370.2">
    <molecule id="Q8C7M3-6"/>
    <property type="protein sequence ID" value="ENSMUSP00000152692.2"/>
    <property type="gene ID" value="ENSMUSG00000021071.18"/>
</dbReference>
<dbReference type="Ensembl" id="ENSMUST00000222316.2">
    <molecule id="Q8C7M3-1"/>
    <property type="protein sequence ID" value="ENSMUSP00000152147.2"/>
    <property type="gene ID" value="ENSMUSG00000021071.18"/>
</dbReference>
<dbReference type="GeneID" id="94090"/>
<dbReference type="KEGG" id="mmu:94090"/>
<dbReference type="UCSC" id="uc007ntp.3">
    <molecule id="Q8C7M3-1"/>
    <property type="organism name" value="mouse"/>
</dbReference>
<dbReference type="UCSC" id="uc007nts.2">
    <molecule id="Q8C7M3-2"/>
    <property type="organism name" value="mouse"/>
</dbReference>
<dbReference type="UCSC" id="uc011ynj.2">
    <molecule id="Q8C7M3-3"/>
    <property type="organism name" value="mouse"/>
</dbReference>
<dbReference type="UCSC" id="uc011ynl.1">
    <molecule id="Q8C7M3-6"/>
    <property type="organism name" value="mouse"/>
</dbReference>
<dbReference type="AGR" id="MGI:2137354"/>
<dbReference type="CTD" id="114088"/>
<dbReference type="MGI" id="MGI:2137354">
    <property type="gene designation" value="Trim9"/>
</dbReference>
<dbReference type="VEuPathDB" id="HostDB:ENSMUSG00000021071"/>
<dbReference type="eggNOG" id="KOG4367">
    <property type="taxonomic scope" value="Eukaryota"/>
</dbReference>
<dbReference type="GeneTree" id="ENSGT00940000154071"/>
<dbReference type="HOGENOM" id="CLU_013137_19_2_1"/>
<dbReference type="InParanoid" id="Q8C7M3"/>
<dbReference type="OrthoDB" id="295536at2759"/>
<dbReference type="PhylomeDB" id="Q8C7M3"/>
<dbReference type="Reactome" id="R-MMU-983168">
    <property type="pathway name" value="Antigen processing: Ubiquitination &amp; Proteasome degradation"/>
</dbReference>
<dbReference type="UniPathway" id="UPA00143"/>
<dbReference type="BioGRID-ORCS" id="94090">
    <property type="hits" value="2 hits in 77 CRISPR screens"/>
</dbReference>
<dbReference type="ChiTaRS" id="Trim9">
    <property type="organism name" value="mouse"/>
</dbReference>
<dbReference type="PRO" id="PR:Q8C7M3"/>
<dbReference type="Proteomes" id="UP000000589">
    <property type="component" value="Chromosome 12"/>
</dbReference>
<dbReference type="RNAct" id="Q8C7M3">
    <property type="molecule type" value="protein"/>
</dbReference>
<dbReference type="Bgee" id="ENSMUSG00000021071">
    <property type="expression patterns" value="Expressed in piriform cortex and 161 other cell types or tissues"/>
</dbReference>
<dbReference type="ExpressionAtlas" id="Q8C7M3">
    <property type="expression patterns" value="baseline and differential"/>
</dbReference>
<dbReference type="GO" id="GO:0005737">
    <property type="term" value="C:cytoplasm"/>
    <property type="evidence" value="ECO:0000314"/>
    <property type="project" value="MGI"/>
</dbReference>
<dbReference type="GO" id="GO:0005856">
    <property type="term" value="C:cytoskeleton"/>
    <property type="evidence" value="ECO:0007669"/>
    <property type="project" value="UniProtKB-SubCell"/>
</dbReference>
<dbReference type="GO" id="GO:0030425">
    <property type="term" value="C:dendrite"/>
    <property type="evidence" value="ECO:0000314"/>
    <property type="project" value="UniProtKB"/>
</dbReference>
<dbReference type="GO" id="GO:0008021">
    <property type="term" value="C:synaptic vesicle"/>
    <property type="evidence" value="ECO:0007669"/>
    <property type="project" value="UniProtKB-SubCell"/>
</dbReference>
<dbReference type="GO" id="GO:0061630">
    <property type="term" value="F:ubiquitin protein ligase activity"/>
    <property type="evidence" value="ECO:0000250"/>
    <property type="project" value="UniProtKB"/>
</dbReference>
<dbReference type="GO" id="GO:0008270">
    <property type="term" value="F:zinc ion binding"/>
    <property type="evidence" value="ECO:0007669"/>
    <property type="project" value="UniProtKB-KW"/>
</dbReference>
<dbReference type="GO" id="GO:0043161">
    <property type="term" value="P:proteasome-mediated ubiquitin-dependent protein catabolic process"/>
    <property type="evidence" value="ECO:0000250"/>
    <property type="project" value="UniProtKB"/>
</dbReference>
<dbReference type="GO" id="GO:0016567">
    <property type="term" value="P:protein ubiquitination"/>
    <property type="evidence" value="ECO:0007669"/>
    <property type="project" value="UniProtKB-UniPathway"/>
</dbReference>
<dbReference type="GO" id="GO:0016079">
    <property type="term" value="P:synaptic vesicle exocytosis"/>
    <property type="evidence" value="ECO:0000266"/>
    <property type="project" value="MGI"/>
</dbReference>
<dbReference type="CDD" id="cd19843">
    <property type="entry name" value="Bbox1_TRIM9_C-I"/>
    <property type="match status" value="1"/>
</dbReference>
<dbReference type="CDD" id="cd19826">
    <property type="entry name" value="Bbox2_TRIM9_C-I"/>
    <property type="match status" value="1"/>
</dbReference>
<dbReference type="CDD" id="cd00063">
    <property type="entry name" value="FN3"/>
    <property type="match status" value="1"/>
</dbReference>
<dbReference type="CDD" id="cd12889">
    <property type="entry name" value="SPRY_PRY_TRIM67_9"/>
    <property type="match status" value="1"/>
</dbReference>
<dbReference type="FunFam" id="2.60.120.920:FF:000009">
    <property type="entry name" value="E3 ubiquitin-protein ligase TRIM9 isoform X1"/>
    <property type="match status" value="1"/>
</dbReference>
<dbReference type="FunFam" id="2.60.40.10:FF:000178">
    <property type="entry name" value="E3 ubiquitin-protein ligase TRIM9 isoform X1"/>
    <property type="match status" value="1"/>
</dbReference>
<dbReference type="FunFam" id="3.30.40.10:FF:000168">
    <property type="entry name" value="E3 ubiquitin-protein ligase TRIM9 isoform X1"/>
    <property type="match status" value="1"/>
</dbReference>
<dbReference type="FunFam" id="4.10.830.40:FF:000001">
    <property type="entry name" value="E3 ubiquitin-protein ligase TRIM9 isoform X1"/>
    <property type="match status" value="1"/>
</dbReference>
<dbReference type="FunFam" id="3.30.160.60:FF:000329">
    <property type="entry name" value="E3 ubiquitin-protein ligase TRIM9 isoform X2"/>
    <property type="match status" value="1"/>
</dbReference>
<dbReference type="FunFam" id="1.20.5.170:FF:000017">
    <property type="entry name" value="Putative E3 ubiquitin-protein ligase TRIM9"/>
    <property type="match status" value="1"/>
</dbReference>
<dbReference type="Gene3D" id="1.20.5.170">
    <property type="match status" value="1"/>
</dbReference>
<dbReference type="Gene3D" id="2.60.120.920">
    <property type="match status" value="1"/>
</dbReference>
<dbReference type="Gene3D" id="4.10.830.40">
    <property type="match status" value="1"/>
</dbReference>
<dbReference type="Gene3D" id="3.30.160.60">
    <property type="entry name" value="Classic Zinc Finger"/>
    <property type="match status" value="1"/>
</dbReference>
<dbReference type="Gene3D" id="2.60.40.10">
    <property type="entry name" value="Immunoglobulins"/>
    <property type="match status" value="1"/>
</dbReference>
<dbReference type="Gene3D" id="3.30.40.10">
    <property type="entry name" value="Zinc/RING finger domain, C3HC4 (zinc finger)"/>
    <property type="match status" value="1"/>
</dbReference>
<dbReference type="InterPro" id="IPR001870">
    <property type="entry name" value="B30.2/SPRY"/>
</dbReference>
<dbReference type="InterPro" id="IPR043136">
    <property type="entry name" value="B30.2/SPRY_sf"/>
</dbReference>
<dbReference type="InterPro" id="IPR003649">
    <property type="entry name" value="Bbox_C"/>
</dbReference>
<dbReference type="InterPro" id="IPR013320">
    <property type="entry name" value="ConA-like_dom_sf"/>
</dbReference>
<dbReference type="InterPro" id="IPR017903">
    <property type="entry name" value="COS_domain"/>
</dbReference>
<dbReference type="InterPro" id="IPR050617">
    <property type="entry name" value="E3_ligase_FN3/SPRY"/>
</dbReference>
<dbReference type="InterPro" id="IPR003961">
    <property type="entry name" value="FN3_dom"/>
</dbReference>
<dbReference type="InterPro" id="IPR036116">
    <property type="entry name" value="FN3_sf"/>
</dbReference>
<dbReference type="InterPro" id="IPR013783">
    <property type="entry name" value="Ig-like_fold"/>
</dbReference>
<dbReference type="InterPro" id="IPR003877">
    <property type="entry name" value="SPRY_dom"/>
</dbReference>
<dbReference type="InterPro" id="IPR049582">
    <property type="entry name" value="TRIM9_Bbox1"/>
</dbReference>
<dbReference type="InterPro" id="IPR027370">
    <property type="entry name" value="Znf-RING_euk"/>
</dbReference>
<dbReference type="InterPro" id="IPR000315">
    <property type="entry name" value="Znf_B-box"/>
</dbReference>
<dbReference type="InterPro" id="IPR001841">
    <property type="entry name" value="Znf_RING"/>
</dbReference>
<dbReference type="InterPro" id="IPR013083">
    <property type="entry name" value="Znf_RING/FYVE/PHD"/>
</dbReference>
<dbReference type="InterPro" id="IPR017907">
    <property type="entry name" value="Znf_RING_CS"/>
</dbReference>
<dbReference type="PANTHER" id="PTHR24099">
    <property type="entry name" value="E3 UBIQUITIN-PROTEIN LIGASE TRIM36-RELATED"/>
    <property type="match status" value="1"/>
</dbReference>
<dbReference type="PANTHER" id="PTHR24099:SF13">
    <property type="entry name" value="E3 UBIQUITIN-PROTEIN LIGASE TRIM9"/>
    <property type="match status" value="1"/>
</dbReference>
<dbReference type="Pfam" id="PF22586">
    <property type="entry name" value="ANCHR-like_BBOX"/>
    <property type="match status" value="1"/>
</dbReference>
<dbReference type="Pfam" id="PF00041">
    <property type="entry name" value="fn3"/>
    <property type="match status" value="1"/>
</dbReference>
<dbReference type="Pfam" id="PF00622">
    <property type="entry name" value="SPRY"/>
    <property type="match status" value="1"/>
</dbReference>
<dbReference type="Pfam" id="PF00643">
    <property type="entry name" value="zf-B_box"/>
    <property type="match status" value="1"/>
</dbReference>
<dbReference type="Pfam" id="PF13445">
    <property type="entry name" value="zf-RING_UBOX"/>
    <property type="match status" value="1"/>
</dbReference>
<dbReference type="SMART" id="SM00502">
    <property type="entry name" value="BBC"/>
    <property type="match status" value="1"/>
</dbReference>
<dbReference type="SMART" id="SM00336">
    <property type="entry name" value="BBOX"/>
    <property type="match status" value="2"/>
</dbReference>
<dbReference type="SMART" id="SM00060">
    <property type="entry name" value="FN3"/>
    <property type="match status" value="1"/>
</dbReference>
<dbReference type="SMART" id="SM00184">
    <property type="entry name" value="RING"/>
    <property type="match status" value="1"/>
</dbReference>
<dbReference type="SMART" id="SM00449">
    <property type="entry name" value="SPRY"/>
    <property type="match status" value="1"/>
</dbReference>
<dbReference type="SUPFAM" id="SSF57845">
    <property type="entry name" value="B-box zinc-binding domain"/>
    <property type="match status" value="1"/>
</dbReference>
<dbReference type="SUPFAM" id="SSF49899">
    <property type="entry name" value="Concanavalin A-like lectins/glucanases"/>
    <property type="match status" value="1"/>
</dbReference>
<dbReference type="SUPFAM" id="SSF49265">
    <property type="entry name" value="Fibronectin type III"/>
    <property type="match status" value="1"/>
</dbReference>
<dbReference type="SUPFAM" id="SSF57850">
    <property type="entry name" value="RING/U-box"/>
    <property type="match status" value="1"/>
</dbReference>
<dbReference type="PROSITE" id="PS50188">
    <property type="entry name" value="B302_SPRY"/>
    <property type="match status" value="1"/>
</dbReference>
<dbReference type="PROSITE" id="PS51262">
    <property type="entry name" value="COS"/>
    <property type="match status" value="1"/>
</dbReference>
<dbReference type="PROSITE" id="PS50853">
    <property type="entry name" value="FN3"/>
    <property type="match status" value="1"/>
</dbReference>
<dbReference type="PROSITE" id="PS50119">
    <property type="entry name" value="ZF_BBOX"/>
    <property type="match status" value="2"/>
</dbReference>
<dbReference type="PROSITE" id="PS00518">
    <property type="entry name" value="ZF_RING_1"/>
    <property type="match status" value="1"/>
</dbReference>
<dbReference type="PROSITE" id="PS50089">
    <property type="entry name" value="ZF_RING_2"/>
    <property type="match status" value="1"/>
</dbReference>
<proteinExistence type="evidence at protein level"/>
<feature type="chain" id="PRO_0000056209" description="E3 ubiquitin-protein ligase TRIM9">
    <location>
        <begin position="1"/>
        <end position="817"/>
    </location>
</feature>
<feature type="domain" description="COS" evidence="8">
    <location>
        <begin position="374"/>
        <end position="432"/>
    </location>
</feature>
<feature type="domain" description="Fibronectin type-III" evidence="6">
    <location>
        <begin position="440"/>
        <end position="535"/>
    </location>
</feature>
<feature type="domain" description="B30.2/SPRY" evidence="7">
    <location>
        <begin position="613"/>
        <end position="794"/>
    </location>
</feature>
<feature type="zinc finger region" description="RING-type" evidence="5">
    <location>
        <begin position="10"/>
        <end position="50"/>
    </location>
</feature>
<feature type="zinc finger region" description="B box-type 1" evidence="4">
    <location>
        <begin position="163"/>
        <end position="212"/>
    </location>
</feature>
<feature type="zinc finger region" description="B box-type 2" evidence="4">
    <location>
        <begin position="224"/>
        <end position="266"/>
    </location>
</feature>
<feature type="region of interest" description="Disordered" evidence="9">
    <location>
        <begin position="535"/>
        <end position="557"/>
    </location>
</feature>
<feature type="coiled-coil region" evidence="3">
    <location>
        <begin position="273"/>
        <end position="340"/>
    </location>
</feature>
<feature type="compositionally biased region" description="Basic and acidic residues" evidence="9">
    <location>
        <begin position="537"/>
        <end position="547"/>
    </location>
</feature>
<feature type="binding site" evidence="4">
    <location>
        <position position="168"/>
    </location>
    <ligand>
        <name>Zn(2+)</name>
        <dbReference type="ChEBI" id="CHEBI:29105"/>
        <label>1</label>
    </ligand>
</feature>
<feature type="binding site" evidence="4">
    <location>
        <position position="171"/>
    </location>
    <ligand>
        <name>Zn(2+)</name>
        <dbReference type="ChEBI" id="CHEBI:29105"/>
        <label>1</label>
    </ligand>
</feature>
<feature type="binding site" evidence="4">
    <location>
        <position position="193"/>
    </location>
    <ligand>
        <name>Zn(2+)</name>
        <dbReference type="ChEBI" id="CHEBI:29105"/>
        <label>1</label>
    </ligand>
</feature>
<feature type="binding site" evidence="4">
    <location>
        <position position="198"/>
    </location>
    <ligand>
        <name>Zn(2+)</name>
        <dbReference type="ChEBI" id="CHEBI:29105"/>
        <label>1</label>
    </ligand>
</feature>
<feature type="binding site" evidence="4">
    <location>
        <position position="229"/>
    </location>
    <ligand>
        <name>Zn(2+)</name>
        <dbReference type="ChEBI" id="CHEBI:29105"/>
        <label>2</label>
    </ligand>
</feature>
<feature type="binding site" evidence="4">
    <location>
        <position position="232"/>
    </location>
    <ligand>
        <name>Zn(2+)</name>
        <dbReference type="ChEBI" id="CHEBI:29105"/>
        <label>2</label>
    </ligand>
</feature>
<feature type="binding site" evidence="4">
    <location>
        <position position="252"/>
    </location>
    <ligand>
        <name>Zn(2+)</name>
        <dbReference type="ChEBI" id="CHEBI:29105"/>
        <label>2</label>
    </ligand>
</feature>
<feature type="binding site" evidence="4">
    <location>
        <position position="258"/>
    </location>
    <ligand>
        <name>Zn(2+)</name>
        <dbReference type="ChEBI" id="CHEBI:29105"/>
        <label>2</label>
    </ligand>
</feature>
<feature type="modified residue" description="Phosphothreonine" evidence="17">
    <location>
        <position position="41"/>
    </location>
</feature>
<feature type="modified residue" description="Phosphoserine" evidence="17">
    <location>
        <position position="44"/>
    </location>
</feature>
<feature type="modified residue" description="Phosphoserine" evidence="17">
    <location>
        <position position="46"/>
    </location>
</feature>
<feature type="modified residue" description="Phosphoserine" evidence="17">
    <location>
        <position position="49"/>
    </location>
</feature>
<feature type="modified residue" description="Phosphoserine" evidence="17">
    <location>
        <position position="53"/>
    </location>
</feature>
<feature type="splice variant" id="VSP_007932" description="In isoform 5." evidence="12">
    <location>
        <begin position="535"/>
        <end position="630"/>
    </location>
</feature>
<feature type="splice variant" id="VSP_007931" description="In isoform 3." evidence="13 15">
    <location>
        <begin position="535"/>
        <end position="608"/>
    </location>
</feature>
<feature type="splice variant" id="VSP_007933" description="In isoform 6." evidence="14">
    <original>AA</original>
    <variation>GR</variation>
    <location>
        <begin position="535"/>
        <end position="536"/>
    </location>
</feature>
<feature type="splice variant" id="VSP_007930" description="In isoform 2." evidence="15">
    <location>
        <position position="535"/>
    </location>
</feature>
<feature type="splice variant" id="VSP_007934" description="In isoform 6." evidence="14">
    <location>
        <begin position="537"/>
        <end position="817"/>
    </location>
</feature>
<feature type="splice variant" id="VSP_007937" description="In isoform 4." evidence="15">
    <original>DTDSEEQTLPFPVPSERLPL</original>
    <variation>GMCGWRQSILRLLGIVLLVD</variation>
    <location>
        <begin position="546"/>
        <end position="565"/>
    </location>
</feature>
<feature type="splice variant" id="VSP_007938" description="In isoform 4." evidence="15">
    <location>
        <begin position="566"/>
        <end position="817"/>
    </location>
</feature>
<feature type="splice variant" id="VSP_007935" description="In isoform 2 and isoform 3." evidence="13 15">
    <original>MYVDNNRSWFMHNNSHTNR</original>
    <variation>I</variation>
    <location>
        <begin position="714"/>
        <end position="732"/>
    </location>
</feature>
<feature type="splice variant" id="VSP_007936" description="In isoform 3." evidence="13 15">
    <original>SLWAPGLRACSGCYFKVCPGAVKSPQAPAP</original>
    <variation>TLHTGLPVPDFYSSRASIA</variation>
    <location>
        <begin position="788"/>
        <end position="817"/>
    </location>
</feature>
<feature type="sequence conflict" description="In Ref. 1; BAC28552." evidence="16" ref="1">
    <original>H</original>
    <variation>D</variation>
    <location>
        <position position="27"/>
    </location>
</feature>
<feature type="sequence conflict" description="In Ref. 1; BAC33982." evidence="16" ref="1">
    <original>Q</original>
    <variation>H</variation>
    <location>
        <position position="251"/>
    </location>
</feature>
<feature type="sequence conflict" description="In Ref. 1; BAC33982." evidence="16" ref="1">
    <original>E</original>
    <variation>Q</variation>
    <location>
        <position position="254"/>
    </location>
</feature>
<feature type="sequence conflict" description="In Ref. 4; AAG53493." evidence="16" ref="4">
    <original>Q</original>
    <variation>R</variation>
    <location>
        <position position="319"/>
    </location>
</feature>
<gene>
    <name type="primary">Trim9</name>
    <name type="synonym">Kiaa0282</name>
</gene>
<keyword id="KW-0025">Alternative splicing</keyword>
<keyword id="KW-0966">Cell projection</keyword>
<keyword id="KW-0175">Coiled coil</keyword>
<keyword id="KW-0963">Cytoplasm</keyword>
<keyword id="KW-0968">Cytoplasmic vesicle</keyword>
<keyword id="KW-0206">Cytoskeleton</keyword>
<keyword id="KW-0479">Metal-binding</keyword>
<keyword id="KW-0597">Phosphoprotein</keyword>
<keyword id="KW-1185">Reference proteome</keyword>
<keyword id="KW-0677">Repeat</keyword>
<keyword id="KW-0770">Synapse</keyword>
<keyword id="KW-0808">Transferase</keyword>
<keyword id="KW-0832">Ubl conjugation</keyword>
<keyword id="KW-0833">Ubl conjugation pathway</keyword>
<keyword id="KW-0862">Zinc</keyword>
<keyword id="KW-0863">Zinc-finger</keyword>
<accession>Q8C7M3</accession>
<accession>Q6ZQE5</accession>
<accession>Q80WT6</accession>
<accession>Q8C7Z4</accession>
<accession>Q8CC32</accession>
<accession>Q8CEG2</accession>
<accession>Q99PQ3</accession>
<protein>
    <recommendedName>
        <fullName>E3 ubiquitin-protein ligase TRIM9</fullName>
        <ecNumber evidence="2">2.3.2.27</ecNumber>
    </recommendedName>
    <alternativeName>
        <fullName evidence="16">RING-type E3 ubiquitin transferase TRIM9</fullName>
    </alternativeName>
    <alternativeName>
        <fullName>Tripartite motif-containing protein 9</fullName>
    </alternativeName>
</protein>